<reference key="1">
    <citation type="journal article" date="1999" name="Nature">
        <title>The DNA sequence of human chromosome 22.</title>
        <authorList>
            <person name="Dunham I."/>
            <person name="Hunt A.R."/>
            <person name="Collins J.E."/>
            <person name="Bruskiewich R."/>
            <person name="Beare D.M."/>
            <person name="Clamp M."/>
            <person name="Smink L.J."/>
            <person name="Ainscough R."/>
            <person name="Almeida J.P."/>
            <person name="Babbage A.K."/>
            <person name="Bagguley C."/>
            <person name="Bailey J."/>
            <person name="Barlow K.F."/>
            <person name="Bates K.N."/>
            <person name="Beasley O.P."/>
            <person name="Bird C.P."/>
            <person name="Blakey S.E."/>
            <person name="Bridgeman A.M."/>
            <person name="Buck D."/>
            <person name="Burgess J."/>
            <person name="Burrill W.D."/>
            <person name="Burton J."/>
            <person name="Carder C."/>
            <person name="Carter N.P."/>
            <person name="Chen Y."/>
            <person name="Clark G."/>
            <person name="Clegg S.M."/>
            <person name="Cobley V.E."/>
            <person name="Cole C.G."/>
            <person name="Collier R.E."/>
            <person name="Connor R."/>
            <person name="Conroy D."/>
            <person name="Corby N.R."/>
            <person name="Coville G.J."/>
            <person name="Cox A.V."/>
            <person name="Davis J."/>
            <person name="Dawson E."/>
            <person name="Dhami P.D."/>
            <person name="Dockree C."/>
            <person name="Dodsworth S.J."/>
            <person name="Durbin R.M."/>
            <person name="Ellington A.G."/>
            <person name="Evans K.L."/>
            <person name="Fey J.M."/>
            <person name="Fleming K."/>
            <person name="French L."/>
            <person name="Garner A.A."/>
            <person name="Gilbert J.G.R."/>
            <person name="Goward M.E."/>
            <person name="Grafham D.V."/>
            <person name="Griffiths M.N.D."/>
            <person name="Hall C."/>
            <person name="Hall R.E."/>
            <person name="Hall-Tamlyn G."/>
            <person name="Heathcott R.W."/>
            <person name="Ho S."/>
            <person name="Holmes S."/>
            <person name="Hunt S.E."/>
            <person name="Jones M.C."/>
            <person name="Kershaw J."/>
            <person name="Kimberley A.M."/>
            <person name="King A."/>
            <person name="Laird G.K."/>
            <person name="Langford C.F."/>
            <person name="Leversha M.A."/>
            <person name="Lloyd C."/>
            <person name="Lloyd D.M."/>
            <person name="Martyn I.D."/>
            <person name="Mashreghi-Mohammadi M."/>
            <person name="Matthews L.H."/>
            <person name="Mccann O.T."/>
            <person name="Mcclay J."/>
            <person name="Mclaren S."/>
            <person name="McMurray A.A."/>
            <person name="Milne S.A."/>
            <person name="Mortimore B.J."/>
            <person name="Odell C.N."/>
            <person name="Pavitt R."/>
            <person name="Pearce A.V."/>
            <person name="Pearson D."/>
            <person name="Phillimore B.J.C.T."/>
            <person name="Phillips S.H."/>
            <person name="Plumb R.W."/>
            <person name="Ramsay H."/>
            <person name="Ramsey Y."/>
            <person name="Rogers L."/>
            <person name="Ross M.T."/>
            <person name="Scott C.E."/>
            <person name="Sehra H.K."/>
            <person name="Skuce C.D."/>
            <person name="Smalley S."/>
            <person name="Smith M.L."/>
            <person name="Soderlund C."/>
            <person name="Spragon L."/>
            <person name="Steward C.A."/>
            <person name="Sulston J.E."/>
            <person name="Swann R.M."/>
            <person name="Vaudin M."/>
            <person name="Wall M."/>
            <person name="Wallis J.M."/>
            <person name="Whiteley M.N."/>
            <person name="Willey D.L."/>
            <person name="Williams L."/>
            <person name="Williams S.A."/>
            <person name="Williamson H."/>
            <person name="Wilmer T.E."/>
            <person name="Wilming L."/>
            <person name="Wright C.L."/>
            <person name="Hubbard T."/>
            <person name="Bentley D.R."/>
            <person name="Beck S."/>
            <person name="Rogers J."/>
            <person name="Shimizu N."/>
            <person name="Minoshima S."/>
            <person name="Kawasaki K."/>
            <person name="Sasaki T."/>
            <person name="Asakawa S."/>
            <person name="Kudoh J."/>
            <person name="Shintani A."/>
            <person name="Shibuya K."/>
            <person name="Yoshizaki Y."/>
            <person name="Aoki N."/>
            <person name="Mitsuyama S."/>
            <person name="Roe B.A."/>
            <person name="Chen F."/>
            <person name="Chu L."/>
            <person name="Crabtree J."/>
            <person name="Deschamps S."/>
            <person name="Do A."/>
            <person name="Do T."/>
            <person name="Dorman A."/>
            <person name="Fang F."/>
            <person name="Fu Y."/>
            <person name="Hu P."/>
            <person name="Hua A."/>
            <person name="Kenton S."/>
            <person name="Lai H."/>
            <person name="Lao H.I."/>
            <person name="Lewis J."/>
            <person name="Lewis S."/>
            <person name="Lin S.-P."/>
            <person name="Loh P."/>
            <person name="Malaj E."/>
            <person name="Nguyen T."/>
            <person name="Pan H."/>
            <person name="Phan S."/>
            <person name="Qi S."/>
            <person name="Qian Y."/>
            <person name="Ray L."/>
            <person name="Ren Q."/>
            <person name="Shaull S."/>
            <person name="Sloan D."/>
            <person name="Song L."/>
            <person name="Wang Q."/>
            <person name="Wang Y."/>
            <person name="Wang Z."/>
            <person name="White J."/>
            <person name="Willingham D."/>
            <person name="Wu H."/>
            <person name="Yao Z."/>
            <person name="Zhan M."/>
            <person name="Zhang G."/>
            <person name="Chissoe S."/>
            <person name="Murray J."/>
            <person name="Miller N."/>
            <person name="Minx P."/>
            <person name="Fulton R."/>
            <person name="Johnson D."/>
            <person name="Bemis G."/>
            <person name="Bentley D."/>
            <person name="Bradshaw H."/>
            <person name="Bourne S."/>
            <person name="Cordes M."/>
            <person name="Du Z."/>
            <person name="Fulton L."/>
            <person name="Goela D."/>
            <person name="Graves T."/>
            <person name="Hawkins J."/>
            <person name="Hinds K."/>
            <person name="Kemp K."/>
            <person name="Latreille P."/>
            <person name="Layman D."/>
            <person name="Ozersky P."/>
            <person name="Rohlfing T."/>
            <person name="Scheet P."/>
            <person name="Walker C."/>
            <person name="Wamsley A."/>
            <person name="Wohldmann P."/>
            <person name="Pepin K."/>
            <person name="Nelson J."/>
            <person name="Korf I."/>
            <person name="Bedell J.A."/>
            <person name="Hillier L.W."/>
            <person name="Mardis E."/>
            <person name="Waterston R."/>
            <person name="Wilson R."/>
            <person name="Emanuel B.S."/>
            <person name="Shaikh T."/>
            <person name="Kurahashi H."/>
            <person name="Saitta S."/>
            <person name="Budarf M.L."/>
            <person name="McDermid H.E."/>
            <person name="Johnson A."/>
            <person name="Wong A.C.C."/>
            <person name="Morrow B.E."/>
            <person name="Edelmann L."/>
            <person name="Kim U.J."/>
            <person name="Shizuya H."/>
            <person name="Simon M.I."/>
            <person name="Dumanski J.P."/>
            <person name="Peyrard M."/>
            <person name="Kedra D."/>
            <person name="Seroussi E."/>
            <person name="Fransson I."/>
            <person name="Tapia I."/>
            <person name="Bruder C.E."/>
            <person name="O'Brien K.P."/>
            <person name="Wilkinson P."/>
            <person name="Bodenteich A."/>
            <person name="Hartman K."/>
            <person name="Hu X."/>
            <person name="Khan A.S."/>
            <person name="Lane L."/>
            <person name="Tilahun Y."/>
            <person name="Wright H."/>
        </authorList>
    </citation>
    <scope>NUCLEOTIDE SEQUENCE [LARGE SCALE GENOMIC DNA]</scope>
</reference>
<reference key="2">
    <citation type="journal article" date="2023" name="Nat. Ecol. Evol.">
        <title>De novo genes with an lncRNA origin encode unique human brain developmental functionality.</title>
        <authorList>
            <person name="An N.A."/>
            <person name="Zhang J."/>
            <person name="Mo F."/>
            <person name="Luan X."/>
            <person name="Tian L."/>
            <person name="Shen Q.S."/>
            <person name="Li X."/>
            <person name="Li C."/>
            <person name="Zhou F."/>
            <person name="Zhang B."/>
            <person name="Ji M."/>
            <person name="Qi J."/>
            <person name="Zhou W.Z."/>
            <person name="Ding W."/>
            <person name="Chen J.Y."/>
            <person name="Yu J."/>
            <person name="Zhang L."/>
            <person name="Shu S."/>
            <person name="Hu B."/>
            <person name="Li C.Y."/>
        </authorList>
    </citation>
    <scope>FUNCTION</scope>
    <scope>SUBCELLULAR LOCATION</scope>
    <scope>TISSUE SPECIFICITY</scope>
    <scope>DEVELOPMENTAL STAGE</scope>
</reference>
<proteinExistence type="evidence at transcript level"/>
<evidence type="ECO:0000255" key="1"/>
<evidence type="ECO:0000269" key="2">
    <source>
    </source>
</evidence>
<evidence type="ECO:0000312" key="3">
    <source>
        <dbReference type="HGNC" id="HGNC:27930"/>
    </source>
</evidence>
<name>SMI45_HUMAN</name>
<sequence length="68" mass="7965">MPHFLDWFVPVYLVISVLILVGFGACIYYFEPGLQEAHKWRMQRPLVDRDLRKTLMVRDNLAFGGPEV</sequence>
<keyword id="KW-0963">Cytoplasm</keyword>
<keyword id="KW-0472">Membrane</keyword>
<keyword id="KW-0524">Neurogenesis</keyword>
<keyword id="KW-0539">Nucleus</keyword>
<keyword id="KW-1185">Reference proteome</keyword>
<keyword id="KW-0812">Transmembrane</keyword>
<keyword id="KW-1133">Transmembrane helix</keyword>
<comment type="function">
    <text evidence="2">Plays a role in the regulation of neuron maturation.</text>
</comment>
<comment type="subcellular location">
    <subcellularLocation>
        <location evidence="2">Nucleus</location>
    </subcellularLocation>
    <subcellularLocation>
        <location evidence="2">Cytoplasm</location>
    </subcellularLocation>
    <subcellularLocation>
        <location evidence="1">Membrane</location>
        <topology evidence="1">Single-pass membrane protein</topology>
    </subcellularLocation>
</comment>
<comment type="tissue specificity">
    <text evidence="2">Highly expressed in brain.</text>
</comment>
<comment type="developmental stage">
    <text evidence="2">Expression increases during fetal brain development (PubMed:36593289). Levels are low at 5 weeks post-conception (wpc), increase greatly at 11 wpc and then decrease slightly at 20 wpc (PubMed:36593289).</text>
</comment>
<organism>
    <name type="scientific">Homo sapiens</name>
    <name type="common">Human</name>
    <dbReference type="NCBI Taxonomy" id="9606"/>
    <lineage>
        <taxon>Eukaryota</taxon>
        <taxon>Metazoa</taxon>
        <taxon>Chordata</taxon>
        <taxon>Craniata</taxon>
        <taxon>Vertebrata</taxon>
        <taxon>Euteleostomi</taxon>
        <taxon>Mammalia</taxon>
        <taxon>Eutheria</taxon>
        <taxon>Euarchontoglires</taxon>
        <taxon>Primates</taxon>
        <taxon>Haplorrhini</taxon>
        <taxon>Catarrhini</taxon>
        <taxon>Hominidae</taxon>
        <taxon>Homo</taxon>
    </lineage>
</organism>
<feature type="chain" id="PRO_0000454678" description="Small integral membrane protein 45">
    <location>
        <begin position="1"/>
        <end position="68"/>
    </location>
</feature>
<feature type="transmembrane region" description="Helical" evidence="1">
    <location>
        <begin position="7"/>
        <end position="27"/>
    </location>
</feature>
<dbReference type="EMBL" id="Z99716">
    <property type="status" value="NOT_ANNOTATED_CDS"/>
    <property type="molecule type" value="Genomic_DNA"/>
</dbReference>
<dbReference type="CCDS" id="CCDS93175.1"/>
<dbReference type="RefSeq" id="NP_001382869.1">
    <property type="nucleotide sequence ID" value="NM_001395940.1"/>
</dbReference>
<dbReference type="RefSeq" id="NP_001382870.1">
    <property type="nucleotide sequence ID" value="NM_001395941.1"/>
</dbReference>
<dbReference type="RefSeq" id="NP_001382871.1">
    <property type="nucleotide sequence ID" value="NM_001395942.1"/>
</dbReference>
<dbReference type="RefSeq" id="NP_001382872.1">
    <property type="nucleotide sequence ID" value="NM_001395943.1"/>
</dbReference>
<dbReference type="RefSeq" id="NP_001382873.1">
    <property type="nucleotide sequence ID" value="NM_001395944.1"/>
</dbReference>
<dbReference type="RefSeq" id="NP_001382874.1">
    <property type="nucleotide sequence ID" value="NM_001395945.1"/>
</dbReference>
<dbReference type="RefSeq" id="NP_001382875.1">
    <property type="nucleotide sequence ID" value="NM_001395946.1"/>
</dbReference>
<dbReference type="RefSeq" id="NP_001382876.1">
    <property type="nucleotide sequence ID" value="NM_001395947.1"/>
</dbReference>
<dbReference type="RefSeq" id="NP_001382877.1">
    <property type="nucleotide sequence ID" value="NM_001395948.1"/>
</dbReference>
<dbReference type="RefSeq" id="NP_001382878.1">
    <property type="nucleotide sequence ID" value="NM_001395949.1"/>
</dbReference>
<dbReference type="RefSeq" id="NP_001382879.1">
    <property type="nucleotide sequence ID" value="NM_001395950.1"/>
</dbReference>
<dbReference type="RefSeq" id="NP_001382880.1">
    <property type="nucleotide sequence ID" value="NM_001395951.1"/>
</dbReference>
<dbReference type="RefSeq" id="NP_001382881.1">
    <property type="nucleotide sequence ID" value="NM_001395952.1"/>
</dbReference>
<dbReference type="PeptideAtlas" id="A0A590UK83"/>
<dbReference type="Ensembl" id="ENST00000381348.5">
    <property type="protein sequence ID" value="ENSP00000499702.1"/>
    <property type="gene ID" value="ENSG00000205704.9"/>
</dbReference>
<dbReference type="Ensembl" id="ENST00000711329.1">
    <property type="protein sequence ID" value="ENSP00000518693.1"/>
    <property type="gene ID" value="ENSG00000205704.9"/>
</dbReference>
<dbReference type="GeneID" id="339674"/>
<dbReference type="MANE-Select" id="ENST00000381348.5">
    <property type="protein sequence ID" value="ENSP00000499702.1"/>
    <property type="RefSeq nucleotide sequence ID" value="NM_001395940.1"/>
    <property type="RefSeq protein sequence ID" value="NP_001382869.1"/>
</dbReference>
<dbReference type="AGR" id="HGNC:27930"/>
<dbReference type="GeneCards" id="SMIM45"/>
<dbReference type="HGNC" id="HGNC:27930">
    <property type="gene designation" value="SMIM45"/>
</dbReference>
<dbReference type="OpenTargets" id="ENSG00000205704"/>
<dbReference type="VEuPathDB" id="HostDB:ENSG00000205704"/>
<dbReference type="GeneTree" id="ENSGT00420000030724"/>
<dbReference type="InParanoid" id="A0A590UK83"/>
<dbReference type="OMA" id="DAHKWRT"/>
<dbReference type="PRO" id="PR:A0A590UK83"/>
<dbReference type="Proteomes" id="UP000005640">
    <property type="component" value="Chromosome 22"/>
</dbReference>
<dbReference type="Bgee" id="ENSG00000205704">
    <property type="expression patterns" value="Expressed in nucleus accumbens and 85 other cell types or tissues"/>
</dbReference>
<dbReference type="ExpressionAtlas" id="A0A590UK83">
    <property type="expression patterns" value="baseline and differential"/>
</dbReference>
<dbReference type="GO" id="GO:0005737">
    <property type="term" value="C:cytoplasm"/>
    <property type="evidence" value="ECO:0000314"/>
    <property type="project" value="UniProtKB"/>
</dbReference>
<dbReference type="GO" id="GO:0016020">
    <property type="term" value="C:membrane"/>
    <property type="evidence" value="ECO:0007669"/>
    <property type="project" value="UniProtKB-SubCell"/>
</dbReference>
<dbReference type="GO" id="GO:0005634">
    <property type="term" value="C:nucleus"/>
    <property type="evidence" value="ECO:0000314"/>
    <property type="project" value="UniProtKB"/>
</dbReference>
<dbReference type="GO" id="GO:0042551">
    <property type="term" value="P:neuron maturation"/>
    <property type="evidence" value="ECO:0000315"/>
    <property type="project" value="UniProtKB"/>
</dbReference>
<gene>
    <name evidence="3" type="primary">SMIM45</name>
    <name evidence="3" type="synonym">LINC00634</name>
</gene>
<protein>
    <recommendedName>
        <fullName evidence="3">Small integral membrane protein 45</fullName>
    </recommendedName>
</protein>
<accession>A0A590UK83</accession>
<accession>A0A590UK49</accession>